<protein>
    <recommendedName>
        <fullName evidence="1">CCA-adding enzyme</fullName>
        <ecNumber evidence="1">2.7.7.72</ecNumber>
    </recommendedName>
    <alternativeName>
        <fullName evidence="1">CCA tRNA nucleotidyltransferase</fullName>
    </alternativeName>
    <alternativeName>
        <fullName evidence="1">tRNA CCA-pyrophosphorylase</fullName>
    </alternativeName>
    <alternativeName>
        <fullName evidence="1">tRNA adenylyl-/cytidylyl- transferase</fullName>
    </alternativeName>
    <alternativeName>
        <fullName evidence="1">tRNA nucleotidyltransferase</fullName>
    </alternativeName>
    <alternativeName>
        <fullName evidence="1">tRNA-NT</fullName>
    </alternativeName>
</protein>
<reference key="1">
    <citation type="submission" date="2007-06" db="EMBL/GenBank/DDBJ databases">
        <title>Complete sequence of Methanococcus maripaludis C7.</title>
        <authorList>
            <consortium name="US DOE Joint Genome Institute"/>
            <person name="Copeland A."/>
            <person name="Lucas S."/>
            <person name="Lapidus A."/>
            <person name="Barry K."/>
            <person name="Glavina del Rio T."/>
            <person name="Dalin E."/>
            <person name="Tice H."/>
            <person name="Pitluck S."/>
            <person name="Clum A."/>
            <person name="Schmutz J."/>
            <person name="Larimer F."/>
            <person name="Land M."/>
            <person name="Hauser L."/>
            <person name="Kyrpides N."/>
            <person name="Anderson I."/>
            <person name="Sieprawska-Lupa M."/>
            <person name="Whitman W.B."/>
            <person name="Richardson P."/>
        </authorList>
    </citation>
    <scope>NUCLEOTIDE SEQUENCE [LARGE SCALE GENOMIC DNA]</scope>
    <source>
        <strain>C7 / ATCC BAA-1331</strain>
    </source>
</reference>
<gene>
    <name evidence="1" type="primary">cca</name>
    <name type="ordered locus">MmarC7_0196</name>
</gene>
<comment type="function">
    <text evidence="1">Catalyzes the addition and repair of the essential 3'-terminal CCA sequence in tRNAs without using a nucleic acid template. Adds these three nucleotides in the order of C, C, and A to the tRNA nucleotide-73, using CTP and ATP as substrates and producing inorganic pyrophosphate. tRNA 3'-terminal CCA addition is required both for tRNA processing and repair. Also involved in tRNA surveillance by mediating tandem CCA addition to generate a CCACCA at the 3' terminus of unstable tRNAs. While stable tRNAs receive only 3'-terminal CCA, unstable tRNAs are marked with CCACCA and rapidly degraded.</text>
</comment>
<comment type="catalytic activity">
    <reaction evidence="1">
        <text>a tRNA precursor + 2 CTP + ATP = a tRNA with a 3' CCA end + 3 diphosphate</text>
        <dbReference type="Rhea" id="RHEA:14433"/>
        <dbReference type="Rhea" id="RHEA-COMP:10465"/>
        <dbReference type="Rhea" id="RHEA-COMP:10468"/>
        <dbReference type="ChEBI" id="CHEBI:30616"/>
        <dbReference type="ChEBI" id="CHEBI:33019"/>
        <dbReference type="ChEBI" id="CHEBI:37563"/>
        <dbReference type="ChEBI" id="CHEBI:74896"/>
        <dbReference type="ChEBI" id="CHEBI:83071"/>
        <dbReference type="EC" id="2.7.7.72"/>
    </reaction>
</comment>
<comment type="catalytic activity">
    <reaction evidence="1">
        <text>a tRNA with a 3' CCA end + 2 CTP + ATP = a tRNA with a 3' CCACCA end + 3 diphosphate</text>
        <dbReference type="Rhea" id="RHEA:76235"/>
        <dbReference type="Rhea" id="RHEA-COMP:10468"/>
        <dbReference type="Rhea" id="RHEA-COMP:18655"/>
        <dbReference type="ChEBI" id="CHEBI:30616"/>
        <dbReference type="ChEBI" id="CHEBI:33019"/>
        <dbReference type="ChEBI" id="CHEBI:37563"/>
        <dbReference type="ChEBI" id="CHEBI:83071"/>
        <dbReference type="ChEBI" id="CHEBI:195187"/>
    </reaction>
    <physiologicalReaction direction="left-to-right" evidence="1">
        <dbReference type="Rhea" id="RHEA:76236"/>
    </physiologicalReaction>
</comment>
<comment type="cofactor">
    <cofactor evidence="1">
        <name>Mg(2+)</name>
        <dbReference type="ChEBI" id="CHEBI:18420"/>
    </cofactor>
</comment>
<comment type="subunit">
    <text evidence="1">Homodimer.</text>
</comment>
<comment type="miscellaneous">
    <text evidence="1">A single active site specifically recognizes both ATP and CTP and is responsible for their addition.</text>
</comment>
<comment type="similarity">
    <text evidence="1">Belongs to the tRNA nucleotidyltransferase/poly(A) polymerase family. Archaeal CCA-adding enzyme subfamily.</text>
</comment>
<sequence length="444" mass="51889">MKKLNIGDYNDILNEVLNDISPTEVEKKELKVFSDKIIAKIKDISKKPVVDIIQVGSTARDANLKDDHDIDIFLRFERETDRDTLKESGLKIGKEVIDYFNGKSWVEYAEHPYVSGEIEKFNLDIVPCYGIENCEKIISAVDRTPLHNEFLIMSYKNKNLSDDIRLLKKFLKGLGIYGSDLKTAGFSGYLCELLILKYGGFLTLISDVKTWKPTKSIVLNEIYEMYDLKKDHVFSKFDDPLVVYDPVDLNRNVAAALNEENLCKFIFYSKMFLKNPSKDFFYGFDKKITDFLNRRERGYLLTLEIKRPENIVEDVIYPQMEKIQKSINKLVKEHDFEYLRYQNFADENTCYLSWEFLVNELPSVKLRIGPPVYSEPGVMNFITHNEHYFVKGCNVCAYKTRKYKNIQILFEDIVNGKFRKIITYPKYVCPENAEIRLGTFVERT</sequence>
<proteinExistence type="inferred from homology"/>
<feature type="chain" id="PRO_1000054350" description="CCA-adding enzyme">
    <location>
        <begin position="1"/>
        <end position="444"/>
    </location>
</feature>
<feature type="binding site" evidence="1">
    <location>
        <position position="57"/>
    </location>
    <ligand>
        <name>ATP</name>
        <dbReference type="ChEBI" id="CHEBI:30616"/>
    </ligand>
</feature>
<feature type="binding site" evidence="1">
    <location>
        <position position="57"/>
    </location>
    <ligand>
        <name>CTP</name>
        <dbReference type="ChEBI" id="CHEBI:37563"/>
    </ligand>
</feature>
<feature type="binding site" evidence="1">
    <location>
        <position position="60"/>
    </location>
    <ligand>
        <name>ATP</name>
        <dbReference type="ChEBI" id="CHEBI:30616"/>
    </ligand>
</feature>
<feature type="binding site" evidence="1">
    <location>
        <position position="60"/>
    </location>
    <ligand>
        <name>CTP</name>
        <dbReference type="ChEBI" id="CHEBI:37563"/>
    </ligand>
</feature>
<feature type="binding site" evidence="1">
    <location>
        <position position="69"/>
    </location>
    <ligand>
        <name>Mg(2+)</name>
        <dbReference type="ChEBI" id="CHEBI:18420"/>
    </ligand>
</feature>
<feature type="binding site" evidence="1">
    <location>
        <position position="71"/>
    </location>
    <ligand>
        <name>Mg(2+)</name>
        <dbReference type="ChEBI" id="CHEBI:18420"/>
    </ligand>
</feature>
<feature type="binding site" evidence="1">
    <location>
        <position position="124"/>
    </location>
    <ligand>
        <name>Mg(2+)</name>
        <dbReference type="ChEBI" id="CHEBI:18420"/>
    </ligand>
</feature>
<feature type="binding site" evidence="1">
    <location>
        <position position="147"/>
    </location>
    <ligand>
        <name>ATP</name>
        <dbReference type="ChEBI" id="CHEBI:30616"/>
    </ligand>
</feature>
<feature type="binding site" evidence="1">
    <location>
        <position position="147"/>
    </location>
    <ligand>
        <name>CTP</name>
        <dbReference type="ChEBI" id="CHEBI:37563"/>
    </ligand>
</feature>
<feature type="binding site" evidence="1">
    <location>
        <position position="168"/>
    </location>
    <ligand>
        <name>ATP</name>
        <dbReference type="ChEBI" id="CHEBI:30616"/>
    </ligand>
</feature>
<feature type="binding site" evidence="1">
    <location>
        <position position="168"/>
    </location>
    <ligand>
        <name>CTP</name>
        <dbReference type="ChEBI" id="CHEBI:37563"/>
    </ligand>
</feature>
<feature type="binding site" evidence="1">
    <location>
        <position position="177"/>
    </location>
    <ligand>
        <name>ATP</name>
        <dbReference type="ChEBI" id="CHEBI:30616"/>
    </ligand>
</feature>
<feature type="binding site" evidence="1">
    <location>
        <position position="177"/>
    </location>
    <ligand>
        <name>CTP</name>
        <dbReference type="ChEBI" id="CHEBI:37563"/>
    </ligand>
</feature>
<accession>A6VFP0</accession>
<organism>
    <name type="scientific">Methanococcus maripaludis (strain C7 / ATCC BAA-1331)</name>
    <dbReference type="NCBI Taxonomy" id="426368"/>
    <lineage>
        <taxon>Archaea</taxon>
        <taxon>Methanobacteriati</taxon>
        <taxon>Methanobacteriota</taxon>
        <taxon>Methanomada group</taxon>
        <taxon>Methanococci</taxon>
        <taxon>Methanococcales</taxon>
        <taxon>Methanococcaceae</taxon>
        <taxon>Methanococcus</taxon>
    </lineage>
</organism>
<name>CCA_METM7</name>
<keyword id="KW-0067">ATP-binding</keyword>
<keyword id="KW-0460">Magnesium</keyword>
<keyword id="KW-0479">Metal-binding</keyword>
<keyword id="KW-0547">Nucleotide-binding</keyword>
<keyword id="KW-0548">Nucleotidyltransferase</keyword>
<keyword id="KW-0692">RNA repair</keyword>
<keyword id="KW-0694">RNA-binding</keyword>
<keyword id="KW-0808">Transferase</keyword>
<keyword id="KW-0819">tRNA processing</keyword>
<dbReference type="EC" id="2.7.7.72" evidence="1"/>
<dbReference type="EMBL" id="CP000745">
    <property type="protein sequence ID" value="ABR65266.1"/>
    <property type="molecule type" value="Genomic_DNA"/>
</dbReference>
<dbReference type="SMR" id="A6VFP0"/>
<dbReference type="STRING" id="426368.MmarC7_0196"/>
<dbReference type="KEGG" id="mmz:MmarC7_0196"/>
<dbReference type="eggNOG" id="arCOG04249">
    <property type="taxonomic scope" value="Archaea"/>
</dbReference>
<dbReference type="HOGENOM" id="CLU_044679_1_0_2"/>
<dbReference type="OrthoDB" id="7378at2157"/>
<dbReference type="GO" id="GO:0005524">
    <property type="term" value="F:ATP binding"/>
    <property type="evidence" value="ECO:0007669"/>
    <property type="project" value="UniProtKB-UniRule"/>
</dbReference>
<dbReference type="GO" id="GO:0004810">
    <property type="term" value="F:CCA tRNA nucleotidyltransferase activity"/>
    <property type="evidence" value="ECO:0007669"/>
    <property type="project" value="UniProtKB-UniRule"/>
</dbReference>
<dbReference type="GO" id="GO:0000287">
    <property type="term" value="F:magnesium ion binding"/>
    <property type="evidence" value="ECO:0007669"/>
    <property type="project" value="UniProtKB-UniRule"/>
</dbReference>
<dbReference type="GO" id="GO:0000049">
    <property type="term" value="F:tRNA binding"/>
    <property type="evidence" value="ECO:0007669"/>
    <property type="project" value="UniProtKB-UniRule"/>
</dbReference>
<dbReference type="GO" id="GO:0042245">
    <property type="term" value="P:RNA repair"/>
    <property type="evidence" value="ECO:0007669"/>
    <property type="project" value="UniProtKB-KW"/>
</dbReference>
<dbReference type="GO" id="GO:0001680">
    <property type="term" value="P:tRNA 3'-terminal CCA addition"/>
    <property type="evidence" value="ECO:0007669"/>
    <property type="project" value="UniProtKB-UniRule"/>
</dbReference>
<dbReference type="CDD" id="cd05400">
    <property type="entry name" value="NT_2-5OAS_ClassI-CCAase"/>
    <property type="match status" value="1"/>
</dbReference>
<dbReference type="Gene3D" id="3.30.70.1550">
    <property type="entry name" value="Archaeal tRNA CCA-adding enzyme catalytic domain"/>
    <property type="match status" value="1"/>
</dbReference>
<dbReference type="Gene3D" id="3.30.460.10">
    <property type="entry name" value="Beta Polymerase, domain 2"/>
    <property type="match status" value="1"/>
</dbReference>
<dbReference type="Gene3D" id="1.10.1410.30">
    <property type="entry name" value="CCA tRNA nucleotidyltransferase, domain 2"/>
    <property type="match status" value="1"/>
</dbReference>
<dbReference type="Gene3D" id="3.30.70.590">
    <property type="entry name" value="Poly(A) polymerase predicted RNA binding domain"/>
    <property type="match status" value="1"/>
</dbReference>
<dbReference type="HAMAP" id="MF_01264">
    <property type="entry name" value="CCA_arch"/>
    <property type="match status" value="1"/>
</dbReference>
<dbReference type="InterPro" id="IPR048833">
    <property type="entry name" value="CAA_C"/>
</dbReference>
<dbReference type="InterPro" id="IPR008229">
    <property type="entry name" value="CCA-adding_arc"/>
</dbReference>
<dbReference type="InterPro" id="IPR042090">
    <property type="entry name" value="CCA_tRNA_nucleotrans_2"/>
</dbReference>
<dbReference type="InterPro" id="IPR006116">
    <property type="entry name" value="NT_2-5OAS_ClassI-CCAase"/>
</dbReference>
<dbReference type="InterPro" id="IPR043519">
    <property type="entry name" value="NT_sf"/>
</dbReference>
<dbReference type="InterPro" id="IPR011068">
    <property type="entry name" value="NuclTrfase_I-like_C"/>
</dbReference>
<dbReference type="InterPro" id="IPR002934">
    <property type="entry name" value="Polymerase_NTP_transf_dom"/>
</dbReference>
<dbReference type="InterPro" id="IPR015329">
    <property type="entry name" value="tRNA_NucTransf2"/>
</dbReference>
<dbReference type="NCBIfam" id="TIGR03671">
    <property type="entry name" value="cca_archaeal"/>
    <property type="match status" value="1"/>
</dbReference>
<dbReference type="PANTHER" id="PTHR39643">
    <property type="entry name" value="CCA-ADDING ENZYME"/>
    <property type="match status" value="1"/>
</dbReference>
<dbReference type="PANTHER" id="PTHR39643:SF1">
    <property type="entry name" value="CCA-ADDING ENZYME"/>
    <property type="match status" value="1"/>
</dbReference>
<dbReference type="Pfam" id="PF21133">
    <property type="entry name" value="CAA_C"/>
    <property type="match status" value="1"/>
</dbReference>
<dbReference type="Pfam" id="PF01909">
    <property type="entry name" value="NTP_transf_2"/>
    <property type="match status" value="1"/>
</dbReference>
<dbReference type="Pfam" id="PF09249">
    <property type="entry name" value="tRNA_NucTransf2"/>
    <property type="match status" value="1"/>
</dbReference>
<dbReference type="PIRSF" id="PIRSF005335">
    <property type="entry name" value="CCA_arch"/>
    <property type="match status" value="1"/>
</dbReference>
<dbReference type="SUPFAM" id="SSF81301">
    <property type="entry name" value="Nucleotidyltransferase"/>
    <property type="match status" value="1"/>
</dbReference>
<dbReference type="SUPFAM" id="SSF55003">
    <property type="entry name" value="PAP/Archaeal CCA-adding enzyme, C-terminal domain"/>
    <property type="match status" value="1"/>
</dbReference>
<dbReference type="SUPFAM" id="SSF81631">
    <property type="entry name" value="PAP/OAS1 substrate-binding domain"/>
    <property type="match status" value="1"/>
</dbReference>
<evidence type="ECO:0000255" key="1">
    <source>
        <dbReference type="HAMAP-Rule" id="MF_01264"/>
    </source>
</evidence>